<dbReference type="EMBL" id="CP000653">
    <property type="protein sequence ID" value="ABP59637.1"/>
    <property type="molecule type" value="Genomic_DNA"/>
</dbReference>
<dbReference type="RefSeq" id="WP_012016357.1">
    <property type="nucleotide sequence ID" value="NC_009436.1"/>
</dbReference>
<dbReference type="SMR" id="A4W7F7"/>
<dbReference type="STRING" id="399742.Ent638_0953"/>
<dbReference type="KEGG" id="ent:Ent638_0953"/>
<dbReference type="eggNOG" id="COG0326">
    <property type="taxonomic scope" value="Bacteria"/>
</dbReference>
<dbReference type="HOGENOM" id="CLU_006684_3_0_6"/>
<dbReference type="OrthoDB" id="9802640at2"/>
<dbReference type="Proteomes" id="UP000000230">
    <property type="component" value="Chromosome"/>
</dbReference>
<dbReference type="GO" id="GO:0005737">
    <property type="term" value="C:cytoplasm"/>
    <property type="evidence" value="ECO:0007669"/>
    <property type="project" value="UniProtKB-SubCell"/>
</dbReference>
<dbReference type="GO" id="GO:0005524">
    <property type="term" value="F:ATP binding"/>
    <property type="evidence" value="ECO:0007669"/>
    <property type="project" value="UniProtKB-UniRule"/>
</dbReference>
<dbReference type="GO" id="GO:0016887">
    <property type="term" value="F:ATP hydrolysis activity"/>
    <property type="evidence" value="ECO:0007669"/>
    <property type="project" value="InterPro"/>
</dbReference>
<dbReference type="GO" id="GO:0140662">
    <property type="term" value="F:ATP-dependent protein folding chaperone"/>
    <property type="evidence" value="ECO:0007669"/>
    <property type="project" value="InterPro"/>
</dbReference>
<dbReference type="GO" id="GO:0051082">
    <property type="term" value="F:unfolded protein binding"/>
    <property type="evidence" value="ECO:0007669"/>
    <property type="project" value="UniProtKB-UniRule"/>
</dbReference>
<dbReference type="CDD" id="cd16927">
    <property type="entry name" value="HATPase_Hsp90-like"/>
    <property type="match status" value="1"/>
</dbReference>
<dbReference type="FunFam" id="1.20.120.790:FF:000002">
    <property type="entry name" value="Molecular chaperone HtpG"/>
    <property type="match status" value="1"/>
</dbReference>
<dbReference type="FunFam" id="3.30.230.80:FF:000002">
    <property type="entry name" value="Molecular chaperone HtpG"/>
    <property type="match status" value="1"/>
</dbReference>
<dbReference type="FunFam" id="3.30.565.10:FF:000009">
    <property type="entry name" value="Molecular chaperone HtpG"/>
    <property type="match status" value="1"/>
</dbReference>
<dbReference type="FunFam" id="3.40.50.11260:FF:000002">
    <property type="entry name" value="Molecular chaperone HtpG"/>
    <property type="match status" value="1"/>
</dbReference>
<dbReference type="Gene3D" id="3.30.230.80">
    <property type="match status" value="1"/>
</dbReference>
<dbReference type="Gene3D" id="3.40.50.11260">
    <property type="match status" value="1"/>
</dbReference>
<dbReference type="Gene3D" id="1.20.120.790">
    <property type="entry name" value="Heat shock protein 90, C-terminal domain"/>
    <property type="match status" value="1"/>
</dbReference>
<dbReference type="Gene3D" id="3.30.565.10">
    <property type="entry name" value="Histidine kinase-like ATPase, C-terminal domain"/>
    <property type="match status" value="1"/>
</dbReference>
<dbReference type="HAMAP" id="MF_00505">
    <property type="entry name" value="HSP90"/>
    <property type="match status" value="1"/>
</dbReference>
<dbReference type="InterPro" id="IPR036890">
    <property type="entry name" value="HATPase_C_sf"/>
</dbReference>
<dbReference type="InterPro" id="IPR019805">
    <property type="entry name" value="Heat_shock_protein_90_CS"/>
</dbReference>
<dbReference type="InterPro" id="IPR037196">
    <property type="entry name" value="HSP90_C"/>
</dbReference>
<dbReference type="InterPro" id="IPR001404">
    <property type="entry name" value="Hsp90_fam"/>
</dbReference>
<dbReference type="InterPro" id="IPR020575">
    <property type="entry name" value="Hsp90_N"/>
</dbReference>
<dbReference type="InterPro" id="IPR020568">
    <property type="entry name" value="Ribosomal_Su5_D2-typ_SF"/>
</dbReference>
<dbReference type="NCBIfam" id="NF003555">
    <property type="entry name" value="PRK05218.1"/>
    <property type="match status" value="1"/>
</dbReference>
<dbReference type="PANTHER" id="PTHR11528">
    <property type="entry name" value="HEAT SHOCK PROTEIN 90 FAMILY MEMBER"/>
    <property type="match status" value="1"/>
</dbReference>
<dbReference type="Pfam" id="PF13589">
    <property type="entry name" value="HATPase_c_3"/>
    <property type="match status" value="1"/>
</dbReference>
<dbReference type="Pfam" id="PF00183">
    <property type="entry name" value="HSP90"/>
    <property type="match status" value="1"/>
</dbReference>
<dbReference type="PIRSF" id="PIRSF002583">
    <property type="entry name" value="Hsp90"/>
    <property type="match status" value="1"/>
</dbReference>
<dbReference type="PRINTS" id="PR00775">
    <property type="entry name" value="HEATSHOCK90"/>
</dbReference>
<dbReference type="SMART" id="SM00387">
    <property type="entry name" value="HATPase_c"/>
    <property type="match status" value="1"/>
</dbReference>
<dbReference type="SUPFAM" id="SSF55874">
    <property type="entry name" value="ATPase domain of HSP90 chaperone/DNA topoisomerase II/histidine kinase"/>
    <property type="match status" value="1"/>
</dbReference>
<dbReference type="SUPFAM" id="SSF110942">
    <property type="entry name" value="HSP90 C-terminal domain"/>
    <property type="match status" value="1"/>
</dbReference>
<dbReference type="SUPFAM" id="SSF54211">
    <property type="entry name" value="Ribosomal protein S5 domain 2-like"/>
    <property type="match status" value="1"/>
</dbReference>
<dbReference type="PROSITE" id="PS00298">
    <property type="entry name" value="HSP90"/>
    <property type="match status" value="1"/>
</dbReference>
<protein>
    <recommendedName>
        <fullName evidence="1">Chaperone protein HtpG</fullName>
    </recommendedName>
    <alternativeName>
        <fullName evidence="1">Heat shock protein HtpG</fullName>
    </alternativeName>
    <alternativeName>
        <fullName evidence="1">High temperature protein G</fullName>
    </alternativeName>
</protein>
<accession>A4W7F7</accession>
<keyword id="KW-0067">ATP-binding</keyword>
<keyword id="KW-0143">Chaperone</keyword>
<keyword id="KW-0963">Cytoplasm</keyword>
<keyword id="KW-0547">Nucleotide-binding</keyword>
<keyword id="KW-0346">Stress response</keyword>
<sequence length="624" mass="71255">MKGQETRGFQSEVKQLLHLMIHSLYSNKEIFLRELISNASDAADKLRFRALSNPDLYEGDGELRVRVSFDKDNRTLTIADNGIGMNRDEVIDHLGTIAKSGTKSFLESMGSDQAKDSQLIGQFGVGFYSAFIVADKVTVRTRAAGDSAENGVFWESHGEGEYTVDDITKADRGTEITLHLREGEDDFLNDWRVRSIISKYSDHIALPVEIEKREEQDGETVVSWEKINKAQALWTRNKSEIKDDEYNEFYKHIAHDFTDPLTWSHNRVEGKQEYTSLLYIPAQAPWDMWNRDHKHGLKLYVQRVFIMDDAEQFMPNYLRFTRGLIDSNDLPLNVSREILQDSTVTRNLRNALTKRTLQMLEKLAKDDAEKYQTFWKQFGLVLKEGPAEDSGNVESIAKLLRFASTHTDSSEQTVSLEDYVSRMKEGQEKIYYITADSYAAAKSSPHLELLRKKGIEVLLLSDRIDEWMMNYLTEFDGKAFQSVAKADESIDKLADEVDETAKEAEKALEPFVERVKTLLGDRVKEVRFTHRLTDTPAIVTTDADEMGTQMAKLFAAAGQAMPEVKYIFELNPDHPLVKRAADTQDEARFSEWVELLLDQSLLAERGTLEDPNQFIKRVNALLLG</sequence>
<name>HTPG_ENT38</name>
<proteinExistence type="inferred from homology"/>
<organism>
    <name type="scientific">Enterobacter sp. (strain 638)</name>
    <dbReference type="NCBI Taxonomy" id="399742"/>
    <lineage>
        <taxon>Bacteria</taxon>
        <taxon>Pseudomonadati</taxon>
        <taxon>Pseudomonadota</taxon>
        <taxon>Gammaproteobacteria</taxon>
        <taxon>Enterobacterales</taxon>
        <taxon>Enterobacteriaceae</taxon>
        <taxon>Enterobacter</taxon>
    </lineage>
</organism>
<feature type="chain" id="PRO_1000060527" description="Chaperone protein HtpG">
    <location>
        <begin position="1"/>
        <end position="624"/>
    </location>
</feature>
<feature type="region of interest" description="A; substrate-binding" evidence="1">
    <location>
        <begin position="1"/>
        <end position="336"/>
    </location>
</feature>
<feature type="region of interest" description="B" evidence="1">
    <location>
        <begin position="337"/>
        <end position="552"/>
    </location>
</feature>
<feature type="region of interest" description="C" evidence="1">
    <location>
        <begin position="553"/>
        <end position="624"/>
    </location>
</feature>
<comment type="function">
    <text evidence="1">Molecular chaperone. Has ATPase activity.</text>
</comment>
<comment type="subunit">
    <text evidence="1">Homodimer.</text>
</comment>
<comment type="subcellular location">
    <subcellularLocation>
        <location evidence="1">Cytoplasm</location>
    </subcellularLocation>
</comment>
<comment type="similarity">
    <text evidence="1">Belongs to the heat shock protein 90 family.</text>
</comment>
<evidence type="ECO:0000255" key="1">
    <source>
        <dbReference type="HAMAP-Rule" id="MF_00505"/>
    </source>
</evidence>
<reference key="1">
    <citation type="journal article" date="2010" name="PLoS Genet.">
        <title>Genome sequence of the plant growth promoting endophytic bacterium Enterobacter sp. 638.</title>
        <authorList>
            <person name="Taghavi S."/>
            <person name="van der Lelie D."/>
            <person name="Hoffman A."/>
            <person name="Zhang Y.B."/>
            <person name="Walla M.D."/>
            <person name="Vangronsveld J."/>
            <person name="Newman L."/>
            <person name="Monchy S."/>
        </authorList>
    </citation>
    <scope>NUCLEOTIDE SEQUENCE [LARGE SCALE GENOMIC DNA]</scope>
    <source>
        <strain>638</strain>
    </source>
</reference>
<gene>
    <name evidence="1" type="primary">htpG</name>
    <name type="ordered locus">Ent638_0953</name>
</gene>